<name>Y1507_ARCFU</name>
<reference key="1">
    <citation type="journal article" date="1997" name="Nature">
        <title>The complete genome sequence of the hyperthermophilic, sulphate-reducing archaeon Archaeoglobus fulgidus.</title>
        <authorList>
            <person name="Klenk H.-P."/>
            <person name="Clayton R.A."/>
            <person name="Tomb J.-F."/>
            <person name="White O."/>
            <person name="Nelson K.E."/>
            <person name="Ketchum K.A."/>
            <person name="Dodson R.J."/>
            <person name="Gwinn M.L."/>
            <person name="Hickey E.K."/>
            <person name="Peterson J.D."/>
            <person name="Richardson D.L."/>
            <person name="Kerlavage A.R."/>
            <person name="Graham D.E."/>
            <person name="Kyrpides N.C."/>
            <person name="Fleischmann R.D."/>
            <person name="Quackenbush J."/>
            <person name="Lee N.H."/>
            <person name="Sutton G.G."/>
            <person name="Gill S.R."/>
            <person name="Kirkness E.F."/>
            <person name="Dougherty B.A."/>
            <person name="McKenney K."/>
            <person name="Adams M.D."/>
            <person name="Loftus B.J."/>
            <person name="Peterson S.N."/>
            <person name="Reich C.I."/>
            <person name="McNeil L.K."/>
            <person name="Badger J.H."/>
            <person name="Glodek A."/>
            <person name="Zhou L."/>
            <person name="Overbeek R."/>
            <person name="Gocayne J.D."/>
            <person name="Weidman J.F."/>
            <person name="McDonald L.A."/>
            <person name="Utterback T.R."/>
            <person name="Cotton M.D."/>
            <person name="Spriggs T."/>
            <person name="Artiach P."/>
            <person name="Kaine B.P."/>
            <person name="Sykes S.M."/>
            <person name="Sadow P.W."/>
            <person name="D'Andrea K.P."/>
            <person name="Bowman C."/>
            <person name="Fujii C."/>
            <person name="Garland S.A."/>
            <person name="Mason T.M."/>
            <person name="Olsen G.J."/>
            <person name="Fraser C.M."/>
            <person name="Smith H.O."/>
            <person name="Woese C.R."/>
            <person name="Venter J.C."/>
        </authorList>
    </citation>
    <scope>NUCLEOTIDE SEQUENCE [LARGE SCALE GENOMIC DNA]</scope>
    <source>
        <strain>ATCC 49558 / DSM 4304 / JCM 9628 / NBRC 100126 / VC-16</strain>
    </source>
</reference>
<organism>
    <name type="scientific">Archaeoglobus fulgidus (strain ATCC 49558 / DSM 4304 / JCM 9628 / NBRC 100126 / VC-16)</name>
    <dbReference type="NCBI Taxonomy" id="224325"/>
    <lineage>
        <taxon>Archaea</taxon>
        <taxon>Methanobacteriati</taxon>
        <taxon>Methanobacteriota</taxon>
        <taxon>Archaeoglobi</taxon>
        <taxon>Archaeoglobales</taxon>
        <taxon>Archaeoglobaceae</taxon>
        <taxon>Archaeoglobus</taxon>
    </lineage>
</organism>
<proteinExistence type="predicted"/>
<gene>
    <name type="ordered locus">AF_1507</name>
</gene>
<protein>
    <recommendedName>
        <fullName>Uncharacterized protein AF_1507</fullName>
    </recommendedName>
</protein>
<dbReference type="EMBL" id="AE000782">
    <property type="protein sequence ID" value="AAB89743.1"/>
    <property type="molecule type" value="Genomic_DNA"/>
</dbReference>
<dbReference type="PIR" id="B69438">
    <property type="entry name" value="B69438"/>
</dbReference>
<dbReference type="RefSeq" id="WP_010879004.1">
    <property type="nucleotide sequence ID" value="NC_000917.1"/>
</dbReference>
<dbReference type="STRING" id="224325.AF_1507"/>
<dbReference type="PaxDb" id="224325-AF_1507"/>
<dbReference type="DNASU" id="1484734"/>
<dbReference type="EnsemblBacteria" id="AAB89743">
    <property type="protein sequence ID" value="AAB89743"/>
    <property type="gene ID" value="AF_1507"/>
</dbReference>
<dbReference type="KEGG" id="afu:AF_1507"/>
<dbReference type="eggNOG" id="arCOG10207">
    <property type="taxonomic scope" value="Archaea"/>
</dbReference>
<dbReference type="HOGENOM" id="CLU_2270935_0_0_2"/>
<dbReference type="OrthoDB" id="50384at2157"/>
<dbReference type="Proteomes" id="UP000002199">
    <property type="component" value="Chromosome"/>
</dbReference>
<feature type="chain" id="PRO_0000128015" description="Uncharacterized protein AF_1507">
    <location>
        <begin position="1"/>
        <end position="112"/>
    </location>
</feature>
<keyword id="KW-1185">Reference proteome</keyword>
<accession>O28765</accession>
<sequence length="112" mass="13009">MEAVEETDTNSKLADTIMENLMKVYTIEEIMQTVRKNKDKSVYLCVKRSKPESPKIYVDSNGNHCYRCDETLLVPIPKKFVVLEPDKLYFEMTLRANIMLALNGAEEKELHH</sequence>